<feature type="chain" id="PRO_1000165623" description="Small ribosomal subunit protein uS13">
    <location>
        <begin position="1"/>
        <end position="120"/>
    </location>
</feature>
<feature type="region of interest" description="Disordered" evidence="2">
    <location>
        <begin position="92"/>
        <end position="120"/>
    </location>
</feature>
<protein>
    <recommendedName>
        <fullName evidence="1">Small ribosomal subunit protein uS13</fullName>
    </recommendedName>
    <alternativeName>
        <fullName evidence="3">30S ribosomal protein S13</fullName>
    </alternativeName>
</protein>
<gene>
    <name evidence="1" type="primary">rpsM</name>
    <name type="ordered locus">LHK_00276</name>
</gene>
<dbReference type="EMBL" id="CP001154">
    <property type="protein sequence ID" value="ACO73271.1"/>
    <property type="molecule type" value="Genomic_DNA"/>
</dbReference>
<dbReference type="RefSeq" id="WP_012695765.1">
    <property type="nucleotide sequence ID" value="NC_012559.1"/>
</dbReference>
<dbReference type="SMR" id="C1DAU0"/>
<dbReference type="STRING" id="557598.LHK_00276"/>
<dbReference type="GeneID" id="75109485"/>
<dbReference type="KEGG" id="lhk:LHK_00276"/>
<dbReference type="eggNOG" id="COG0099">
    <property type="taxonomic scope" value="Bacteria"/>
</dbReference>
<dbReference type="HOGENOM" id="CLU_103849_1_2_4"/>
<dbReference type="Proteomes" id="UP000002010">
    <property type="component" value="Chromosome"/>
</dbReference>
<dbReference type="GO" id="GO:0005829">
    <property type="term" value="C:cytosol"/>
    <property type="evidence" value="ECO:0007669"/>
    <property type="project" value="TreeGrafter"/>
</dbReference>
<dbReference type="GO" id="GO:0015935">
    <property type="term" value="C:small ribosomal subunit"/>
    <property type="evidence" value="ECO:0007669"/>
    <property type="project" value="TreeGrafter"/>
</dbReference>
<dbReference type="GO" id="GO:0019843">
    <property type="term" value="F:rRNA binding"/>
    <property type="evidence" value="ECO:0007669"/>
    <property type="project" value="UniProtKB-UniRule"/>
</dbReference>
<dbReference type="GO" id="GO:0003735">
    <property type="term" value="F:structural constituent of ribosome"/>
    <property type="evidence" value="ECO:0007669"/>
    <property type="project" value="InterPro"/>
</dbReference>
<dbReference type="GO" id="GO:0000049">
    <property type="term" value="F:tRNA binding"/>
    <property type="evidence" value="ECO:0007669"/>
    <property type="project" value="UniProtKB-UniRule"/>
</dbReference>
<dbReference type="GO" id="GO:0006412">
    <property type="term" value="P:translation"/>
    <property type="evidence" value="ECO:0007669"/>
    <property type="project" value="UniProtKB-UniRule"/>
</dbReference>
<dbReference type="FunFam" id="1.10.8.50:FF:000001">
    <property type="entry name" value="30S ribosomal protein S13"/>
    <property type="match status" value="1"/>
</dbReference>
<dbReference type="FunFam" id="4.10.910.10:FF:000001">
    <property type="entry name" value="30S ribosomal protein S13"/>
    <property type="match status" value="1"/>
</dbReference>
<dbReference type="Gene3D" id="1.10.8.50">
    <property type="match status" value="1"/>
</dbReference>
<dbReference type="Gene3D" id="4.10.910.10">
    <property type="entry name" value="30s ribosomal protein s13, domain 2"/>
    <property type="match status" value="1"/>
</dbReference>
<dbReference type="HAMAP" id="MF_01315">
    <property type="entry name" value="Ribosomal_uS13"/>
    <property type="match status" value="1"/>
</dbReference>
<dbReference type="InterPro" id="IPR027437">
    <property type="entry name" value="Rbsml_uS13_C"/>
</dbReference>
<dbReference type="InterPro" id="IPR001892">
    <property type="entry name" value="Ribosomal_uS13"/>
</dbReference>
<dbReference type="InterPro" id="IPR010979">
    <property type="entry name" value="Ribosomal_uS13-like_H2TH"/>
</dbReference>
<dbReference type="InterPro" id="IPR019980">
    <property type="entry name" value="Ribosomal_uS13_bac-type"/>
</dbReference>
<dbReference type="InterPro" id="IPR018269">
    <property type="entry name" value="Ribosomal_uS13_CS"/>
</dbReference>
<dbReference type="NCBIfam" id="TIGR03631">
    <property type="entry name" value="uS13_bact"/>
    <property type="match status" value="1"/>
</dbReference>
<dbReference type="PANTHER" id="PTHR10871">
    <property type="entry name" value="30S RIBOSOMAL PROTEIN S13/40S RIBOSOMAL PROTEIN S18"/>
    <property type="match status" value="1"/>
</dbReference>
<dbReference type="PANTHER" id="PTHR10871:SF1">
    <property type="entry name" value="SMALL RIBOSOMAL SUBUNIT PROTEIN US13M"/>
    <property type="match status" value="1"/>
</dbReference>
<dbReference type="Pfam" id="PF00416">
    <property type="entry name" value="Ribosomal_S13"/>
    <property type="match status" value="1"/>
</dbReference>
<dbReference type="PIRSF" id="PIRSF002134">
    <property type="entry name" value="Ribosomal_S13"/>
    <property type="match status" value="1"/>
</dbReference>
<dbReference type="SUPFAM" id="SSF46946">
    <property type="entry name" value="S13-like H2TH domain"/>
    <property type="match status" value="1"/>
</dbReference>
<dbReference type="PROSITE" id="PS00646">
    <property type="entry name" value="RIBOSOMAL_S13_1"/>
    <property type="match status" value="1"/>
</dbReference>
<dbReference type="PROSITE" id="PS50159">
    <property type="entry name" value="RIBOSOMAL_S13_2"/>
    <property type="match status" value="1"/>
</dbReference>
<keyword id="KW-1185">Reference proteome</keyword>
<keyword id="KW-0687">Ribonucleoprotein</keyword>
<keyword id="KW-0689">Ribosomal protein</keyword>
<keyword id="KW-0694">RNA-binding</keyword>
<keyword id="KW-0699">rRNA-binding</keyword>
<keyword id="KW-0820">tRNA-binding</keyword>
<organism>
    <name type="scientific">Laribacter hongkongensis (strain HLHK9)</name>
    <dbReference type="NCBI Taxonomy" id="557598"/>
    <lineage>
        <taxon>Bacteria</taxon>
        <taxon>Pseudomonadati</taxon>
        <taxon>Pseudomonadota</taxon>
        <taxon>Betaproteobacteria</taxon>
        <taxon>Neisseriales</taxon>
        <taxon>Aquaspirillaceae</taxon>
        <taxon>Laribacter</taxon>
    </lineage>
</organism>
<proteinExistence type="inferred from homology"/>
<accession>C1DAU0</accession>
<comment type="function">
    <text evidence="1">Located at the top of the head of the 30S subunit, it contacts several helices of the 16S rRNA. In the 70S ribosome it contacts the 23S rRNA (bridge B1a) and protein L5 of the 50S subunit (bridge B1b), connecting the 2 subunits; these bridges are implicated in subunit movement. Contacts the tRNAs in the A and P-sites.</text>
</comment>
<comment type="subunit">
    <text evidence="1">Part of the 30S ribosomal subunit. Forms a loose heterodimer with protein S19. Forms two bridges to the 50S subunit in the 70S ribosome.</text>
</comment>
<comment type="similarity">
    <text evidence="1">Belongs to the universal ribosomal protein uS13 family.</text>
</comment>
<name>RS13_LARHH</name>
<evidence type="ECO:0000255" key="1">
    <source>
        <dbReference type="HAMAP-Rule" id="MF_01315"/>
    </source>
</evidence>
<evidence type="ECO:0000256" key="2">
    <source>
        <dbReference type="SAM" id="MobiDB-lite"/>
    </source>
</evidence>
<evidence type="ECO:0000305" key="3"/>
<reference key="1">
    <citation type="journal article" date="2009" name="PLoS Genet.">
        <title>The complete genome and proteome of Laribacter hongkongensis reveal potential mechanisms for adaptations to different temperatures and habitats.</title>
        <authorList>
            <person name="Woo P.C.Y."/>
            <person name="Lau S.K.P."/>
            <person name="Tse H."/>
            <person name="Teng J.L.L."/>
            <person name="Curreem S.O."/>
            <person name="Tsang A.K.L."/>
            <person name="Fan R.Y.Y."/>
            <person name="Wong G.K.M."/>
            <person name="Huang Y."/>
            <person name="Loman N.J."/>
            <person name="Snyder L.A.S."/>
            <person name="Cai J.J."/>
            <person name="Huang J.-D."/>
            <person name="Mak W."/>
            <person name="Pallen M.J."/>
            <person name="Lok S."/>
            <person name="Yuen K.-Y."/>
        </authorList>
    </citation>
    <scope>NUCLEOTIDE SEQUENCE [LARGE SCALE GENOMIC DNA]</scope>
    <source>
        <strain>HLHK9</strain>
    </source>
</reference>
<sequence length="120" mass="13526">MARIAGVNIPNHQHIWVGLQAIYGIGATRAKVICSAAGIEISTKVKDLTDAEMEKLRDEIAKFTIEGDLRREVTMNIKRLMDLGCYRGFRHRRGLPCRGQRTRTNARTRKGPRKPIAGKK</sequence>